<keyword id="KW-0240">DNA-directed RNA polymerase</keyword>
<keyword id="KW-0548">Nucleotidyltransferase</keyword>
<keyword id="KW-1185">Reference proteome</keyword>
<keyword id="KW-0804">Transcription</keyword>
<keyword id="KW-0808">Transferase</keyword>
<accession>Q8DXT6</accession>
<gene>
    <name evidence="1" type="primary">rpoY</name>
    <name type="ordered locus">SAG1760</name>
</gene>
<feature type="chain" id="PRO_0000163145" description="DNA-directed RNA polymerase subunit epsilon">
    <location>
        <begin position="1"/>
        <end position="76"/>
    </location>
</feature>
<name>RPOY_STRA5</name>
<comment type="function">
    <text evidence="1">A non-essential component of RNA polymerase (RNAP).</text>
</comment>
<comment type="catalytic activity">
    <reaction evidence="1">
        <text>RNA(n) + a ribonucleoside 5'-triphosphate = RNA(n+1) + diphosphate</text>
        <dbReference type="Rhea" id="RHEA:21248"/>
        <dbReference type="Rhea" id="RHEA-COMP:14527"/>
        <dbReference type="Rhea" id="RHEA-COMP:17342"/>
        <dbReference type="ChEBI" id="CHEBI:33019"/>
        <dbReference type="ChEBI" id="CHEBI:61557"/>
        <dbReference type="ChEBI" id="CHEBI:140395"/>
        <dbReference type="EC" id="2.7.7.6"/>
    </reaction>
</comment>
<comment type="subunit">
    <text evidence="1">RNAP is composed of a core of 2 alpha, a beta and a beta' subunit. The core is associated with a delta subunit, and at least one of epsilon or omega. When a sigma factor is associated with the core the holoenzyme is formed, which can initiate transcription.</text>
</comment>
<comment type="similarity">
    <text evidence="1">Belongs to the RNA polymerase subunit epsilon family.</text>
</comment>
<proteinExistence type="inferred from homology"/>
<protein>
    <recommendedName>
        <fullName evidence="1">DNA-directed RNA polymerase subunit epsilon</fullName>
        <shortName evidence="1">RNAP epsilon subunit</shortName>
        <ecNumber evidence="1">2.7.7.6</ecNumber>
    </recommendedName>
    <alternativeName>
        <fullName evidence="1">RNA polymerase epsilon subunit</fullName>
    </alternativeName>
    <alternativeName>
        <fullName evidence="1">Transcriptase subunit epsilon</fullName>
    </alternativeName>
</protein>
<organism>
    <name type="scientific">Streptococcus agalactiae serotype V (strain ATCC BAA-611 / 2603 V/R)</name>
    <dbReference type="NCBI Taxonomy" id="208435"/>
    <lineage>
        <taxon>Bacteria</taxon>
        <taxon>Bacillati</taxon>
        <taxon>Bacillota</taxon>
        <taxon>Bacilli</taxon>
        <taxon>Lactobacillales</taxon>
        <taxon>Streptococcaceae</taxon>
        <taxon>Streptococcus</taxon>
    </lineage>
</organism>
<dbReference type="EC" id="2.7.7.6" evidence="1"/>
<dbReference type="EMBL" id="AE009948">
    <property type="protein sequence ID" value="AAN00623.1"/>
    <property type="molecule type" value="Genomic_DNA"/>
</dbReference>
<dbReference type="RefSeq" id="NP_688750.1">
    <property type="nucleotide sequence ID" value="NC_004116.1"/>
</dbReference>
<dbReference type="RefSeq" id="WP_000639570.1">
    <property type="nucleotide sequence ID" value="NC_004116.1"/>
</dbReference>
<dbReference type="SMR" id="Q8DXT6"/>
<dbReference type="STRING" id="208435.SAG1760"/>
<dbReference type="KEGG" id="sag:SAG1760"/>
<dbReference type="PATRIC" id="fig|208435.3.peg.1766"/>
<dbReference type="HOGENOM" id="CLU_187518_0_0_9"/>
<dbReference type="OrthoDB" id="2147503at2"/>
<dbReference type="Proteomes" id="UP000000821">
    <property type="component" value="Chromosome"/>
</dbReference>
<dbReference type="GO" id="GO:0000428">
    <property type="term" value="C:DNA-directed RNA polymerase complex"/>
    <property type="evidence" value="ECO:0007669"/>
    <property type="project" value="UniProtKB-KW"/>
</dbReference>
<dbReference type="GO" id="GO:0003677">
    <property type="term" value="F:DNA binding"/>
    <property type="evidence" value="ECO:0007669"/>
    <property type="project" value="UniProtKB-UniRule"/>
</dbReference>
<dbReference type="GO" id="GO:0003899">
    <property type="term" value="F:DNA-directed RNA polymerase activity"/>
    <property type="evidence" value="ECO:0007669"/>
    <property type="project" value="UniProtKB-UniRule"/>
</dbReference>
<dbReference type="GO" id="GO:0006351">
    <property type="term" value="P:DNA-templated transcription"/>
    <property type="evidence" value="ECO:0007669"/>
    <property type="project" value="UniProtKB-UniRule"/>
</dbReference>
<dbReference type="Gene3D" id="3.10.20.730">
    <property type="entry name" value="RNAP, epsilon subunit-like"/>
    <property type="match status" value="1"/>
</dbReference>
<dbReference type="HAMAP" id="MF_01553">
    <property type="entry name" value="RNApol_bact_RpoY"/>
    <property type="match status" value="1"/>
</dbReference>
<dbReference type="InterPro" id="IPR009907">
    <property type="entry name" value="RpoY"/>
</dbReference>
<dbReference type="NCBIfam" id="NF010188">
    <property type="entry name" value="PRK13667.1"/>
    <property type="match status" value="1"/>
</dbReference>
<dbReference type="Pfam" id="PF07288">
    <property type="entry name" value="RpoY"/>
    <property type="match status" value="1"/>
</dbReference>
<sequence length="76" mass="9107">MIYKVFYQETKERNPRREQTKTLYVTIDAANELEGRIAARKLVEENTAYNIEFIELLSDKHLEYEKETGVFELTEF</sequence>
<evidence type="ECO:0000255" key="1">
    <source>
        <dbReference type="HAMAP-Rule" id="MF_01553"/>
    </source>
</evidence>
<reference key="1">
    <citation type="journal article" date="2002" name="Proc. Natl. Acad. Sci. U.S.A.">
        <title>Complete genome sequence and comparative genomic analysis of an emerging human pathogen, serotype V Streptococcus agalactiae.</title>
        <authorList>
            <person name="Tettelin H."/>
            <person name="Masignani V."/>
            <person name="Cieslewicz M.J."/>
            <person name="Eisen J.A."/>
            <person name="Peterson S.N."/>
            <person name="Wessels M.R."/>
            <person name="Paulsen I.T."/>
            <person name="Nelson K.E."/>
            <person name="Margarit I."/>
            <person name="Read T.D."/>
            <person name="Madoff L.C."/>
            <person name="Wolf A.M."/>
            <person name="Beanan M.J."/>
            <person name="Brinkac L.M."/>
            <person name="Daugherty S.C."/>
            <person name="DeBoy R.T."/>
            <person name="Durkin A.S."/>
            <person name="Kolonay J.F."/>
            <person name="Madupu R."/>
            <person name="Lewis M.R."/>
            <person name="Radune D."/>
            <person name="Fedorova N.B."/>
            <person name="Scanlan D."/>
            <person name="Khouri H.M."/>
            <person name="Mulligan S."/>
            <person name="Carty H.A."/>
            <person name="Cline R.T."/>
            <person name="Van Aken S.E."/>
            <person name="Gill J."/>
            <person name="Scarselli M."/>
            <person name="Mora M."/>
            <person name="Iacobini E.T."/>
            <person name="Brettoni C."/>
            <person name="Galli G."/>
            <person name="Mariani M."/>
            <person name="Vegni F."/>
            <person name="Maione D."/>
            <person name="Rinaudo D."/>
            <person name="Rappuoli R."/>
            <person name="Telford J.L."/>
            <person name="Kasper D.L."/>
            <person name="Grandi G."/>
            <person name="Fraser C.M."/>
        </authorList>
    </citation>
    <scope>NUCLEOTIDE SEQUENCE [LARGE SCALE GENOMIC DNA]</scope>
    <source>
        <strain>ATCC BAA-611 / 2603 V/R</strain>
    </source>
</reference>